<sequence length="154" mass="16955">MGLSDGEWTLVLNAWGKVEADVAGHGQEVLIRLFTGHPETLEKFDKFKHLKTGAEMKASEDLKKHGNTVLTALGGILKKKGHHEAEVKHLAESHANKHKIPVKYLEFISDAIIHVLHAKHPSDFGADAQGAMSKALELFRNDMAAQYKVLGFQG</sequence>
<feature type="initiator methionine" description="Removed" evidence="9">
    <location>
        <position position="1"/>
    </location>
</feature>
<feature type="chain" id="PRO_0000404697" description="Myoglobin" evidence="10">
    <location>
        <begin position="2"/>
        <end position="154"/>
    </location>
</feature>
<feature type="domain" description="Globin" evidence="8">
    <location>
        <begin position="2"/>
        <end position="148"/>
    </location>
</feature>
<feature type="binding site" evidence="6">
    <location>
        <position position="65"/>
    </location>
    <ligand>
        <name>nitrite</name>
        <dbReference type="ChEBI" id="CHEBI:16301"/>
    </ligand>
</feature>
<feature type="binding site" evidence="3 8">
    <location>
        <position position="65"/>
    </location>
    <ligand>
        <name>O2</name>
        <dbReference type="ChEBI" id="CHEBI:15379"/>
    </ligand>
</feature>
<feature type="binding site" description="proximal binding residue" evidence="1">
    <location>
        <position position="94"/>
    </location>
    <ligand>
        <name>heme b</name>
        <dbReference type="ChEBI" id="CHEBI:60344"/>
    </ligand>
    <ligandPart>
        <name>Fe</name>
        <dbReference type="ChEBI" id="CHEBI:18248"/>
    </ligandPart>
</feature>
<feature type="modified residue" description="Phosphoserine" evidence="7">
    <location>
        <position position="4"/>
    </location>
</feature>
<feature type="modified residue" description="Phosphothreonine" evidence="5">
    <location>
        <position position="68"/>
    </location>
</feature>
<feature type="sequence conflict" description="In Ref. 2; ACJ68031." evidence="10" ref="2">
    <original>G</original>
    <variation>E</variation>
    <location>
        <position position="53"/>
    </location>
</feature>
<gene>
    <name evidence="4" type="primary">MB</name>
</gene>
<keyword id="KW-0963">Cytoplasm</keyword>
<keyword id="KW-0903">Direct protein sequencing</keyword>
<keyword id="KW-0349">Heme</keyword>
<keyword id="KW-0408">Iron</keyword>
<keyword id="KW-0479">Metal-binding</keyword>
<keyword id="KW-0514">Muscle protein</keyword>
<keyword id="KW-0560">Oxidoreductase</keyword>
<keyword id="KW-0561">Oxygen transport</keyword>
<keyword id="KW-0597">Phosphoprotein</keyword>
<keyword id="KW-1185">Reference proteome</keyword>
<keyword id="KW-0813">Transport</keyword>
<evidence type="ECO:0000250" key="1">
    <source>
        <dbReference type="UniProtKB" id="P02144"/>
    </source>
</evidence>
<evidence type="ECO:0000250" key="2">
    <source>
        <dbReference type="UniProtKB" id="P02185"/>
    </source>
</evidence>
<evidence type="ECO:0000250" key="3">
    <source>
        <dbReference type="UniProtKB" id="P02189"/>
    </source>
</evidence>
<evidence type="ECO:0000250" key="4">
    <source>
        <dbReference type="UniProtKB" id="P02190"/>
    </source>
</evidence>
<evidence type="ECO:0000250" key="5">
    <source>
        <dbReference type="UniProtKB" id="P04247"/>
    </source>
</evidence>
<evidence type="ECO:0000250" key="6">
    <source>
        <dbReference type="UniProtKB" id="P68082"/>
    </source>
</evidence>
<evidence type="ECO:0000250" key="7">
    <source>
        <dbReference type="UniProtKB" id="Q9QZ76"/>
    </source>
</evidence>
<evidence type="ECO:0000255" key="8">
    <source>
        <dbReference type="PROSITE-ProRule" id="PRU00238"/>
    </source>
</evidence>
<evidence type="ECO:0000269" key="9">
    <source>
    </source>
</evidence>
<evidence type="ECO:0000305" key="10"/>
<evidence type="ECO:0000312" key="11">
    <source>
        <dbReference type="EMBL" id="ACJ68031.1"/>
    </source>
</evidence>
<organism>
    <name type="scientific">Capra hircus</name>
    <name type="common">Goat</name>
    <dbReference type="NCBI Taxonomy" id="9925"/>
    <lineage>
        <taxon>Eukaryota</taxon>
        <taxon>Metazoa</taxon>
        <taxon>Chordata</taxon>
        <taxon>Craniata</taxon>
        <taxon>Vertebrata</taxon>
        <taxon>Euteleostomi</taxon>
        <taxon>Mammalia</taxon>
        <taxon>Eutheria</taxon>
        <taxon>Laurasiatheria</taxon>
        <taxon>Artiodactyla</taxon>
        <taxon>Ruminantia</taxon>
        <taxon>Pecora</taxon>
        <taxon>Bovidae</taxon>
        <taxon>Caprinae</taxon>
        <taxon>Capra</taxon>
    </lineage>
</organism>
<proteinExistence type="evidence at protein level"/>
<reference evidence="10" key="1">
    <citation type="journal article" date="2009" name="Meat Sci.">
        <title>Primary structure of goat myoglobin.</title>
        <authorList>
            <person name="Suman S.P."/>
            <person name="Joseph P."/>
            <person name="Li S."/>
            <person name="Steinke L."/>
            <person name="Fontaine M."/>
        </authorList>
    </citation>
    <scope>PROTEIN SEQUENCE OF 2-154</scope>
    <source>
        <tissue evidence="9">Heart muscle</tissue>
    </source>
</reference>
<reference evidence="10 11" key="2">
    <citation type="submission" date="2008-11" db="EMBL/GenBank/DDBJ databases">
        <authorList>
            <person name="Jia J.J."/>
            <person name="Ge C.R."/>
            <person name="Wang Z.C."/>
            <person name="Gu F.Y."/>
        </authorList>
    </citation>
    <scope>NUCLEOTIDE SEQUENCE [MRNA] OF 14-154</scope>
    <source>
        <tissue evidence="11">Muscle</tissue>
    </source>
</reference>
<name>MYG_CAPHI</name>
<comment type="function">
    <text evidence="1">Monomeric heme protein which primary function is to store oxygen and facilitate its diffusion within muscle tissues. Reversibly binds oxygen through a pentacoordinated heme iron and enables its timely and efficient release as needed during periods of heightened demand. Depending on the oxidative conditions of tissues and cells, and in addition to its ability to bind oxygen, it also has a nitrite reductase activity whereby it regulates the production of bioactive nitric oxide. Under stress conditions, like hypoxia and anoxia, it also protects cells against reactive oxygen species thanks to its pseudoperoxidase activity.</text>
</comment>
<comment type="catalytic activity">
    <reaction evidence="1">
        <text>Fe(III)-heme b-[protein] + nitric oxide + H2O = Fe(II)-heme b-[protein] + nitrite + 2 H(+)</text>
        <dbReference type="Rhea" id="RHEA:77711"/>
        <dbReference type="Rhea" id="RHEA-COMP:18975"/>
        <dbReference type="Rhea" id="RHEA-COMP:18976"/>
        <dbReference type="ChEBI" id="CHEBI:15377"/>
        <dbReference type="ChEBI" id="CHEBI:15378"/>
        <dbReference type="ChEBI" id="CHEBI:16301"/>
        <dbReference type="ChEBI" id="CHEBI:16480"/>
        <dbReference type="ChEBI" id="CHEBI:55376"/>
        <dbReference type="ChEBI" id="CHEBI:60344"/>
    </reaction>
    <physiologicalReaction direction="right-to-left" evidence="1">
        <dbReference type="Rhea" id="RHEA:77713"/>
    </physiologicalReaction>
</comment>
<comment type="catalytic activity">
    <reaction evidence="1">
        <text>H2O2 + AH2 = A + 2 H2O</text>
        <dbReference type="Rhea" id="RHEA:30275"/>
        <dbReference type="ChEBI" id="CHEBI:13193"/>
        <dbReference type="ChEBI" id="CHEBI:15377"/>
        <dbReference type="ChEBI" id="CHEBI:16240"/>
        <dbReference type="ChEBI" id="CHEBI:17499"/>
    </reaction>
</comment>
<comment type="subunit">
    <text evidence="2">Monomeric.</text>
</comment>
<comment type="subcellular location">
    <subcellularLocation>
        <location evidence="1">Cytoplasm</location>
        <location evidence="1">Sarcoplasm</location>
    </subcellularLocation>
</comment>
<comment type="similarity">
    <text evidence="8">Belongs to the globin family.</text>
</comment>
<dbReference type="EC" id="1.7.-.-" evidence="1"/>
<dbReference type="EC" id="1.11.1.-" evidence="1"/>
<dbReference type="EMBL" id="FJ457764">
    <property type="protein sequence ID" value="ACJ68031.1"/>
    <property type="molecule type" value="mRNA"/>
</dbReference>
<dbReference type="SMR" id="B7U9B5"/>
<dbReference type="STRING" id="9925.ENSCHIP00000004261"/>
<dbReference type="CarbonylDB" id="B7U9B5"/>
<dbReference type="Proteomes" id="UP000291000">
    <property type="component" value="Unassembled WGS sequence"/>
</dbReference>
<dbReference type="Proteomes" id="UP000694566">
    <property type="component" value="Unplaced"/>
</dbReference>
<dbReference type="GO" id="GO:0070062">
    <property type="term" value="C:extracellular exosome"/>
    <property type="evidence" value="ECO:0007669"/>
    <property type="project" value="TreeGrafter"/>
</dbReference>
<dbReference type="GO" id="GO:0016528">
    <property type="term" value="C:sarcoplasm"/>
    <property type="evidence" value="ECO:0000250"/>
    <property type="project" value="UniProtKB"/>
</dbReference>
<dbReference type="GO" id="GO:0020037">
    <property type="term" value="F:heme binding"/>
    <property type="evidence" value="ECO:0007669"/>
    <property type="project" value="InterPro"/>
</dbReference>
<dbReference type="GO" id="GO:0046872">
    <property type="term" value="F:metal ion binding"/>
    <property type="evidence" value="ECO:0007669"/>
    <property type="project" value="UniProtKB-KW"/>
</dbReference>
<dbReference type="GO" id="GO:0098809">
    <property type="term" value="F:nitrite reductase activity"/>
    <property type="evidence" value="ECO:0000250"/>
    <property type="project" value="UniProtKB"/>
</dbReference>
<dbReference type="GO" id="GO:0019825">
    <property type="term" value="F:oxygen binding"/>
    <property type="evidence" value="ECO:0007669"/>
    <property type="project" value="InterPro"/>
</dbReference>
<dbReference type="GO" id="GO:0005344">
    <property type="term" value="F:oxygen carrier activity"/>
    <property type="evidence" value="ECO:0000250"/>
    <property type="project" value="UniProtKB"/>
</dbReference>
<dbReference type="GO" id="GO:0004601">
    <property type="term" value="F:peroxidase activity"/>
    <property type="evidence" value="ECO:0000250"/>
    <property type="project" value="UniProtKB"/>
</dbReference>
<dbReference type="GO" id="GO:0019430">
    <property type="term" value="P:removal of superoxide radicals"/>
    <property type="evidence" value="ECO:0000250"/>
    <property type="project" value="UniProtKB"/>
</dbReference>
<dbReference type="Gene3D" id="6.10.140.2100">
    <property type="match status" value="1"/>
</dbReference>
<dbReference type="Gene3D" id="6.10.140.2110">
    <property type="match status" value="1"/>
</dbReference>
<dbReference type="InterPro" id="IPR000971">
    <property type="entry name" value="Globin"/>
</dbReference>
<dbReference type="InterPro" id="IPR009050">
    <property type="entry name" value="Globin-like_sf"/>
</dbReference>
<dbReference type="InterPro" id="IPR002335">
    <property type="entry name" value="Myoglobin"/>
</dbReference>
<dbReference type="PANTHER" id="PTHR47132">
    <property type="entry name" value="MYOGLOBIN"/>
    <property type="match status" value="1"/>
</dbReference>
<dbReference type="PANTHER" id="PTHR47132:SF1">
    <property type="entry name" value="MYOGLOBIN"/>
    <property type="match status" value="1"/>
</dbReference>
<dbReference type="Pfam" id="PF00042">
    <property type="entry name" value="Globin"/>
    <property type="match status" value="1"/>
</dbReference>
<dbReference type="PRINTS" id="PR00613">
    <property type="entry name" value="MYOGLOBIN"/>
</dbReference>
<dbReference type="SUPFAM" id="SSF46458">
    <property type="entry name" value="Globin-like"/>
    <property type="match status" value="1"/>
</dbReference>
<dbReference type="PROSITE" id="PS01033">
    <property type="entry name" value="GLOBIN"/>
    <property type="match status" value="1"/>
</dbReference>
<protein>
    <recommendedName>
        <fullName evidence="11">Myoglobin</fullName>
    </recommendedName>
    <alternativeName>
        <fullName evidence="1">Nitrite reductase MB</fullName>
        <ecNumber evidence="1">1.7.-.-</ecNumber>
    </alternativeName>
    <alternativeName>
        <fullName evidence="1">Pseudoperoxidase MB</fullName>
        <ecNumber evidence="1">1.11.1.-</ecNumber>
    </alternativeName>
</protein>
<accession>B7U9B5</accession>